<feature type="chain" id="PRO_0000382389" description="Glutamate-1-semialdehyde 2,1-aminomutase">
    <location>
        <begin position="1"/>
        <end position="431"/>
    </location>
</feature>
<feature type="modified residue" description="N6-(pyridoxal phosphate)lysine" evidence="1">
    <location>
        <position position="269"/>
    </location>
</feature>
<evidence type="ECO:0000255" key="1">
    <source>
        <dbReference type="HAMAP-Rule" id="MF_00375"/>
    </source>
</evidence>
<keyword id="KW-0963">Cytoplasm</keyword>
<keyword id="KW-0413">Isomerase</keyword>
<keyword id="KW-0627">Porphyrin biosynthesis</keyword>
<keyword id="KW-0663">Pyridoxal phosphate</keyword>
<keyword id="KW-1185">Reference proteome</keyword>
<proteinExistence type="inferred from homology"/>
<protein>
    <recommendedName>
        <fullName evidence="1">Glutamate-1-semialdehyde 2,1-aminomutase</fullName>
        <shortName evidence="1">GSA</shortName>
        <ecNumber evidence="1">5.4.3.8</ecNumber>
    </recommendedName>
    <alternativeName>
        <fullName evidence="1">Glutamate-1-semialdehyde aminotransferase</fullName>
        <shortName evidence="1">GSA-AT</shortName>
    </alternativeName>
</protein>
<dbReference type="EC" id="5.4.3.8" evidence="1"/>
<dbReference type="EMBL" id="CP001616">
    <property type="protein sequence ID" value="ACQ92208.1"/>
    <property type="molecule type" value="Genomic_DNA"/>
</dbReference>
<dbReference type="RefSeq" id="WP_012728807.1">
    <property type="nucleotide sequence ID" value="NC_012691.1"/>
</dbReference>
<dbReference type="SMR" id="C4LAK4"/>
<dbReference type="STRING" id="595494.Tola_0579"/>
<dbReference type="KEGG" id="tau:Tola_0579"/>
<dbReference type="eggNOG" id="COG0001">
    <property type="taxonomic scope" value="Bacteria"/>
</dbReference>
<dbReference type="HOGENOM" id="CLU_016922_1_5_6"/>
<dbReference type="OrthoDB" id="9801052at2"/>
<dbReference type="UniPathway" id="UPA00251">
    <property type="reaction ID" value="UER00317"/>
</dbReference>
<dbReference type="Proteomes" id="UP000009073">
    <property type="component" value="Chromosome"/>
</dbReference>
<dbReference type="GO" id="GO:0005737">
    <property type="term" value="C:cytoplasm"/>
    <property type="evidence" value="ECO:0007669"/>
    <property type="project" value="UniProtKB-SubCell"/>
</dbReference>
<dbReference type="GO" id="GO:0042286">
    <property type="term" value="F:glutamate-1-semialdehyde 2,1-aminomutase activity"/>
    <property type="evidence" value="ECO:0007669"/>
    <property type="project" value="UniProtKB-UniRule"/>
</dbReference>
<dbReference type="GO" id="GO:0030170">
    <property type="term" value="F:pyridoxal phosphate binding"/>
    <property type="evidence" value="ECO:0007669"/>
    <property type="project" value="InterPro"/>
</dbReference>
<dbReference type="GO" id="GO:0008483">
    <property type="term" value="F:transaminase activity"/>
    <property type="evidence" value="ECO:0007669"/>
    <property type="project" value="InterPro"/>
</dbReference>
<dbReference type="GO" id="GO:0006782">
    <property type="term" value="P:protoporphyrinogen IX biosynthetic process"/>
    <property type="evidence" value="ECO:0007669"/>
    <property type="project" value="UniProtKB-UniRule"/>
</dbReference>
<dbReference type="CDD" id="cd00610">
    <property type="entry name" value="OAT_like"/>
    <property type="match status" value="1"/>
</dbReference>
<dbReference type="FunFam" id="3.40.640.10:FF:000021">
    <property type="entry name" value="Glutamate-1-semialdehyde 2,1-aminomutase"/>
    <property type="match status" value="1"/>
</dbReference>
<dbReference type="Gene3D" id="3.90.1150.10">
    <property type="entry name" value="Aspartate Aminotransferase, domain 1"/>
    <property type="match status" value="1"/>
</dbReference>
<dbReference type="Gene3D" id="3.40.640.10">
    <property type="entry name" value="Type I PLP-dependent aspartate aminotransferase-like (Major domain)"/>
    <property type="match status" value="1"/>
</dbReference>
<dbReference type="HAMAP" id="MF_00375">
    <property type="entry name" value="HemL_aminotrans_3"/>
    <property type="match status" value="1"/>
</dbReference>
<dbReference type="InterPro" id="IPR004639">
    <property type="entry name" value="4pyrrol_synth_GluAld_NH2Trfase"/>
</dbReference>
<dbReference type="InterPro" id="IPR005814">
    <property type="entry name" value="Aminotrans_3"/>
</dbReference>
<dbReference type="InterPro" id="IPR049704">
    <property type="entry name" value="Aminotrans_3_PPA_site"/>
</dbReference>
<dbReference type="InterPro" id="IPR015424">
    <property type="entry name" value="PyrdxlP-dep_Trfase"/>
</dbReference>
<dbReference type="InterPro" id="IPR015421">
    <property type="entry name" value="PyrdxlP-dep_Trfase_major"/>
</dbReference>
<dbReference type="InterPro" id="IPR015422">
    <property type="entry name" value="PyrdxlP-dep_Trfase_small"/>
</dbReference>
<dbReference type="NCBIfam" id="TIGR00713">
    <property type="entry name" value="hemL"/>
    <property type="match status" value="1"/>
</dbReference>
<dbReference type="NCBIfam" id="NF000818">
    <property type="entry name" value="PRK00062.1"/>
    <property type="match status" value="1"/>
</dbReference>
<dbReference type="PANTHER" id="PTHR43713">
    <property type="entry name" value="GLUTAMATE-1-SEMIALDEHYDE 2,1-AMINOMUTASE"/>
    <property type="match status" value="1"/>
</dbReference>
<dbReference type="PANTHER" id="PTHR43713:SF3">
    <property type="entry name" value="GLUTAMATE-1-SEMIALDEHYDE 2,1-AMINOMUTASE 1, CHLOROPLASTIC-RELATED"/>
    <property type="match status" value="1"/>
</dbReference>
<dbReference type="Pfam" id="PF00202">
    <property type="entry name" value="Aminotran_3"/>
    <property type="match status" value="1"/>
</dbReference>
<dbReference type="SUPFAM" id="SSF53383">
    <property type="entry name" value="PLP-dependent transferases"/>
    <property type="match status" value="1"/>
</dbReference>
<dbReference type="PROSITE" id="PS00600">
    <property type="entry name" value="AA_TRANSFER_CLASS_3"/>
    <property type="match status" value="1"/>
</dbReference>
<sequence length="431" mass="45845">MAYSTQRSEQLFTAAQQSIPGGVNSPVRAFNGVGGTPRFIAKADGAYLFDVDGNRYIDYVGSWGPMLLGHNHPAIKAAVLAAVENGLSYGAPTESEVLMAEMIRQIMPDMEMVRMVNSGTEATMSAIRLARGYTGRDKIVKFEGCYHGHADCLLVKAGSGALTLGQPNSPGVPADFAKHTLTCTYNDLASVEATFASYGSEIACIIVEPVAGNMNCIPPVPGFLEGLRAICDKYGALLIIDEVMTGFRVSLQGAQGYYGITPDLTTLGKIIGGGMPVGAFGGKKEIMAYIAPTGPVYQAGTLSGNPVAMAAGLAMLKAIQQPGLYDTLAEKTRQVAEGLKAAAAKQGIPLTVNYVGAMFGFFFTDEPEITRFEQVSRCDIDAFRRFYHLMLQEGVYLAPSAYEAGFLSLAHSEADIAETLAAAERCFAQMK</sequence>
<organism>
    <name type="scientific">Tolumonas auensis (strain DSM 9187 / NBRC 110442 / TA 4)</name>
    <dbReference type="NCBI Taxonomy" id="595494"/>
    <lineage>
        <taxon>Bacteria</taxon>
        <taxon>Pseudomonadati</taxon>
        <taxon>Pseudomonadota</taxon>
        <taxon>Gammaproteobacteria</taxon>
        <taxon>Aeromonadales</taxon>
        <taxon>Aeromonadaceae</taxon>
        <taxon>Tolumonas</taxon>
    </lineage>
</organism>
<comment type="catalytic activity">
    <reaction evidence="1">
        <text>(S)-4-amino-5-oxopentanoate = 5-aminolevulinate</text>
        <dbReference type="Rhea" id="RHEA:14265"/>
        <dbReference type="ChEBI" id="CHEBI:57501"/>
        <dbReference type="ChEBI" id="CHEBI:356416"/>
        <dbReference type="EC" id="5.4.3.8"/>
    </reaction>
</comment>
<comment type="cofactor">
    <cofactor evidence="1">
        <name>pyridoxal 5'-phosphate</name>
        <dbReference type="ChEBI" id="CHEBI:597326"/>
    </cofactor>
</comment>
<comment type="pathway">
    <text evidence="1">Porphyrin-containing compound metabolism; protoporphyrin-IX biosynthesis; 5-aminolevulinate from L-glutamyl-tRNA(Glu): step 2/2.</text>
</comment>
<comment type="subunit">
    <text evidence="1">Homodimer.</text>
</comment>
<comment type="subcellular location">
    <subcellularLocation>
        <location evidence="1">Cytoplasm</location>
    </subcellularLocation>
</comment>
<comment type="similarity">
    <text evidence="1">Belongs to the class-III pyridoxal-phosphate-dependent aminotransferase family. HemL subfamily.</text>
</comment>
<reference key="1">
    <citation type="submission" date="2009-05" db="EMBL/GenBank/DDBJ databases">
        <title>Complete sequence of Tolumonas auensis DSM 9187.</title>
        <authorList>
            <consortium name="US DOE Joint Genome Institute"/>
            <person name="Lucas S."/>
            <person name="Copeland A."/>
            <person name="Lapidus A."/>
            <person name="Glavina del Rio T."/>
            <person name="Tice H."/>
            <person name="Bruce D."/>
            <person name="Goodwin L."/>
            <person name="Pitluck S."/>
            <person name="Chertkov O."/>
            <person name="Brettin T."/>
            <person name="Detter J.C."/>
            <person name="Han C."/>
            <person name="Larimer F."/>
            <person name="Land M."/>
            <person name="Hauser L."/>
            <person name="Kyrpides N."/>
            <person name="Mikhailova N."/>
            <person name="Spring S."/>
            <person name="Beller H."/>
        </authorList>
    </citation>
    <scope>NUCLEOTIDE SEQUENCE [LARGE SCALE GENOMIC DNA]</scope>
    <source>
        <strain>DSM 9187 / NBRC 110442 / TA 4</strain>
    </source>
</reference>
<gene>
    <name evidence="1" type="primary">hemL</name>
    <name type="ordered locus">Tola_0579</name>
</gene>
<accession>C4LAK4</accession>
<name>GSA_TOLAT</name>